<sequence length="535" mass="60255">MAALGCARLRWALLGPRVAGCGLCPQGARAKAAIPTALPADEAAQAPGAGPGDRRRRRSLEELPRLGQLRFFYQAFVQGYLLHLHKLQVLNKARYGPMWVSYLGPQLFVNLASAPLVETVMRQEGKYPVRNDMQLWKEHRDHQDLAYGVFTTDGHDWYQLRQALNQRLLKPAEAALYTDALNEVIDSFVVRLDQLRAESASGDQVPDMADLLYHFALEAICYILFEKRIGCLEASIPKDTENFIRSVGLMFQNSVYVTFLPKWTRPLLPFWKRYLDGWDTIFSFGKNLIDQKLQEVVAQLQSAGSDGVQVSGYLHSLLTSGQLSPREALGSLPELLLAGVDTTSNTLTWALYHLSKNPEIQAALRKEVVGVVAAGQVPQHKDFAHMPLLKAVLKETLRLYPVIPANSRIIVDKEIEVGGFLFPKNTQFVFCHYVTSRDPSTFSEPDTFWPYRWLRKGQPETSKTQHPFGSVPFGYGVRACLGRRIAELEMQLLLARLIQRYELMLAPETGEVQSVARIVLVPNKKVGLRFLPTQR</sequence>
<gene>
    <name type="primary">CYP27A1</name>
    <name type="synonym">CYP27</name>
</gene>
<accession>P17177</accession>
<comment type="function">
    <text evidence="2 5">Cytochrome P450 monooxygenase that catalyzes regio- and stereospecific hydroxylation of cholesterol and its derivatives. Hydroxylates (with R stereochemistry) the terminal methyl group of cholesterol side-chain in a three step reaction to yield at first a C26 alcohol, then a C26 aldehyde and finally a C26 acid (By similarity). Regulates cholesterol homeostasis by catalyzing the conversion of excess cholesterol to bile acids via both the 'neutral' (classic) and the 'acid' (alternative) pathways (PubMed:2722778). May also regulate cholesterol homeostasis via generation of active oxysterols, which act as ligands for NR1H2 and NR1H3 nuclear receptors, modulating the transcription of genes involved in lipid metabolism. Plays a role in cholestanol metabolism in the cerebellum. Similarly to cholesterol, hydroxylates cholestanol and may facilitate sterol diffusion through the blood-brain barrier to the systemic circulation for further degradation. Also hydroxylates retinal 7-ketocholesterol, a noxious oxysterol with pro-inflammatory and pro-apoptotic effects, and may play a role in its elimination from the retinal pigment epithelium. May play a redundant role in vitamin D biosynthesis. Catalyzes 25-hydroxylation of vitamin D3 that is required for its conversion to a functionally active form (By similarity).</text>
</comment>
<comment type="catalytic activity">
    <reaction evidence="5">
        <text>5beta-cholestane-3alpha,7alpha,12alpha-triol + 6 reduced [adrenodoxin] + 3 O2 + 5 H(+) = (25R)-3alpha,7alpha,12alpha-trihydroxy-5beta-cholestan-26-oate + 6 oxidized [adrenodoxin] + 4 H2O</text>
        <dbReference type="Rhea" id="RHEA:34631"/>
        <dbReference type="Rhea" id="RHEA-COMP:9998"/>
        <dbReference type="Rhea" id="RHEA-COMP:9999"/>
        <dbReference type="ChEBI" id="CHEBI:15377"/>
        <dbReference type="ChEBI" id="CHEBI:15378"/>
        <dbReference type="ChEBI" id="CHEBI:15379"/>
        <dbReference type="ChEBI" id="CHEBI:16496"/>
        <dbReference type="ChEBI" id="CHEBI:33737"/>
        <dbReference type="ChEBI" id="CHEBI:33738"/>
        <dbReference type="ChEBI" id="CHEBI:58734"/>
        <dbReference type="EC" id="1.14.15.15"/>
    </reaction>
    <physiologicalReaction direction="left-to-right" evidence="7">
        <dbReference type="Rhea" id="RHEA:34632"/>
    </physiologicalReaction>
</comment>
<comment type="catalytic activity">
    <reaction evidence="2">
        <text>cholestanol + 2 reduced [adrenodoxin] + O2 + 2 H(+) = (25R)-26-hydroxycholestanol + 2 oxidized [adrenodoxin] + H2O</text>
        <dbReference type="Rhea" id="RHEA:53812"/>
        <dbReference type="Rhea" id="RHEA-COMP:9998"/>
        <dbReference type="Rhea" id="RHEA-COMP:9999"/>
        <dbReference type="ChEBI" id="CHEBI:15377"/>
        <dbReference type="ChEBI" id="CHEBI:15378"/>
        <dbReference type="ChEBI" id="CHEBI:15379"/>
        <dbReference type="ChEBI" id="CHEBI:33737"/>
        <dbReference type="ChEBI" id="CHEBI:33738"/>
        <dbReference type="ChEBI" id="CHEBI:86570"/>
        <dbReference type="ChEBI" id="CHEBI:137688"/>
    </reaction>
    <physiologicalReaction direction="left-to-right" evidence="2">
        <dbReference type="Rhea" id="RHEA:53813"/>
    </physiologicalReaction>
</comment>
<comment type="catalytic activity">
    <reaction evidence="2">
        <text>(25R)-3beta-hydroxycholest-5-en-7-one-26-al + 2 reduced [adrenodoxin] + O2 + H(+) = (25R)-3beta-hydroxycholest-5-en-7-one-26-oate + 2 oxidized [adrenodoxin] + H2O</text>
        <dbReference type="Rhea" id="RHEA:47380"/>
        <dbReference type="Rhea" id="RHEA-COMP:9998"/>
        <dbReference type="Rhea" id="RHEA-COMP:9999"/>
        <dbReference type="ChEBI" id="CHEBI:15377"/>
        <dbReference type="ChEBI" id="CHEBI:15378"/>
        <dbReference type="ChEBI" id="CHEBI:15379"/>
        <dbReference type="ChEBI" id="CHEBI:33737"/>
        <dbReference type="ChEBI" id="CHEBI:33738"/>
        <dbReference type="ChEBI" id="CHEBI:87677"/>
        <dbReference type="ChEBI" id="CHEBI:87678"/>
    </reaction>
    <physiologicalReaction direction="left-to-right" evidence="2">
        <dbReference type="Rhea" id="RHEA:47381"/>
    </physiologicalReaction>
</comment>
<comment type="catalytic activity">
    <reaction evidence="2">
        <text>(25R)-3beta,26-dihydroxycholest-5-en-7-one + 2 reduced [adrenodoxin] + O2 + 2 H(+) = (25R)-3beta-hydroxycholest-5-en-7-one-26-al + 2 oxidized [adrenodoxin] + 2 H2O</text>
        <dbReference type="Rhea" id="RHEA:47376"/>
        <dbReference type="Rhea" id="RHEA-COMP:9998"/>
        <dbReference type="Rhea" id="RHEA-COMP:9999"/>
        <dbReference type="ChEBI" id="CHEBI:15377"/>
        <dbReference type="ChEBI" id="CHEBI:15378"/>
        <dbReference type="ChEBI" id="CHEBI:15379"/>
        <dbReference type="ChEBI" id="CHEBI:33737"/>
        <dbReference type="ChEBI" id="CHEBI:33738"/>
        <dbReference type="ChEBI" id="CHEBI:87653"/>
        <dbReference type="ChEBI" id="CHEBI:87677"/>
    </reaction>
    <physiologicalReaction direction="left-to-right" evidence="2">
        <dbReference type="Rhea" id="RHEA:47377"/>
    </physiologicalReaction>
</comment>
<comment type="catalytic activity">
    <reaction evidence="2">
        <text>7-oxocholesterol + 2 reduced [adrenodoxin] + O2 + 2 H(+) = (25R)-3beta,26-dihydroxycholest-5-en-7-one + 2 oxidized [adrenodoxin] + H2O</text>
        <dbReference type="Rhea" id="RHEA:47344"/>
        <dbReference type="Rhea" id="RHEA-COMP:9998"/>
        <dbReference type="Rhea" id="RHEA-COMP:9999"/>
        <dbReference type="ChEBI" id="CHEBI:15377"/>
        <dbReference type="ChEBI" id="CHEBI:15378"/>
        <dbReference type="ChEBI" id="CHEBI:15379"/>
        <dbReference type="ChEBI" id="CHEBI:33737"/>
        <dbReference type="ChEBI" id="CHEBI:33738"/>
        <dbReference type="ChEBI" id="CHEBI:64294"/>
        <dbReference type="ChEBI" id="CHEBI:87653"/>
    </reaction>
    <physiologicalReaction direction="left-to-right" evidence="2">
        <dbReference type="Rhea" id="RHEA:47345"/>
    </physiologicalReaction>
</comment>
<comment type="catalytic activity">
    <reaction evidence="2">
        <text>calciol + 2 reduced [adrenodoxin] + O2 + 2 H(+) = calcidiol + 2 oxidized [adrenodoxin] + H2O</text>
        <dbReference type="Rhea" id="RHEA:46588"/>
        <dbReference type="Rhea" id="RHEA-COMP:9998"/>
        <dbReference type="Rhea" id="RHEA-COMP:9999"/>
        <dbReference type="ChEBI" id="CHEBI:15377"/>
        <dbReference type="ChEBI" id="CHEBI:15378"/>
        <dbReference type="ChEBI" id="CHEBI:15379"/>
        <dbReference type="ChEBI" id="CHEBI:17933"/>
        <dbReference type="ChEBI" id="CHEBI:28940"/>
        <dbReference type="ChEBI" id="CHEBI:33737"/>
        <dbReference type="ChEBI" id="CHEBI:33738"/>
    </reaction>
    <physiologicalReaction direction="left-to-right" evidence="2">
        <dbReference type="Rhea" id="RHEA:46589"/>
    </physiologicalReaction>
</comment>
<comment type="catalytic activity">
    <reaction evidence="8">
        <text>(25R)-5beta-cholestane-3alpha,7alpha,12alpha,26-tetrol + 2 reduced [adrenodoxin] + O2 + 2 H(+) = (25R)-3alpha,7alpha,12alpha-trihydroxy-5beta-cholestan-26-al + 2 oxidized [adrenodoxin] + 2 H2O</text>
        <dbReference type="Rhea" id="RHEA:40231"/>
        <dbReference type="Rhea" id="RHEA-COMP:9998"/>
        <dbReference type="Rhea" id="RHEA-COMP:9999"/>
        <dbReference type="ChEBI" id="CHEBI:15377"/>
        <dbReference type="ChEBI" id="CHEBI:15378"/>
        <dbReference type="ChEBI" id="CHEBI:15379"/>
        <dbReference type="ChEBI" id="CHEBI:33737"/>
        <dbReference type="ChEBI" id="CHEBI:33738"/>
        <dbReference type="ChEBI" id="CHEBI:48939"/>
        <dbReference type="ChEBI" id="CHEBI:48940"/>
    </reaction>
    <physiologicalReaction direction="left-to-right" evidence="7">
        <dbReference type="Rhea" id="RHEA:40232"/>
    </physiologicalReaction>
</comment>
<comment type="catalytic activity">
    <reaction evidence="2">
        <text>2 reduced [adrenodoxin] + cholesterol + O2 + 2 H(+) = (25R)-cholest-5-ene-3beta,26-diol + 2 oxidized [adrenodoxin] + H2O</text>
        <dbReference type="Rhea" id="RHEA:46400"/>
        <dbReference type="Rhea" id="RHEA-COMP:9998"/>
        <dbReference type="Rhea" id="RHEA-COMP:9999"/>
        <dbReference type="ChEBI" id="CHEBI:15377"/>
        <dbReference type="ChEBI" id="CHEBI:15378"/>
        <dbReference type="ChEBI" id="CHEBI:15379"/>
        <dbReference type="ChEBI" id="CHEBI:16113"/>
        <dbReference type="ChEBI" id="CHEBI:33737"/>
        <dbReference type="ChEBI" id="CHEBI:33738"/>
        <dbReference type="ChEBI" id="CHEBI:76591"/>
    </reaction>
    <physiologicalReaction direction="left-to-right" evidence="2">
        <dbReference type="Rhea" id="RHEA:46401"/>
    </physiologicalReaction>
</comment>
<comment type="catalytic activity">
    <reaction evidence="2">
        <text>(25R)-3beta,4beta-dihydroxycholest-5-en-26-al + 2 reduced [adrenodoxin] + O2 + H(+) = (25R)-3beta,4beta-dihydroxycholest-5-en-26-oate + 2 oxidized [adrenodoxin] + H2O</text>
        <dbReference type="Rhea" id="RHEA:46436"/>
        <dbReference type="Rhea" id="RHEA-COMP:9998"/>
        <dbReference type="Rhea" id="RHEA-COMP:9999"/>
        <dbReference type="ChEBI" id="CHEBI:15377"/>
        <dbReference type="ChEBI" id="CHEBI:15378"/>
        <dbReference type="ChEBI" id="CHEBI:15379"/>
        <dbReference type="ChEBI" id="CHEBI:33737"/>
        <dbReference type="ChEBI" id="CHEBI:33738"/>
        <dbReference type="ChEBI" id="CHEBI:86115"/>
        <dbReference type="ChEBI" id="CHEBI:86116"/>
    </reaction>
    <physiologicalReaction direction="left-to-right" evidence="2">
        <dbReference type="Rhea" id="RHEA:46437"/>
    </physiologicalReaction>
</comment>
<comment type="catalytic activity">
    <reaction evidence="2">
        <text>(25R)-4beta,26-dihydroxycholesterol + 2 reduced [adrenodoxin] + O2 + 2 H(+) = (25R)-3beta,4beta-dihydroxycholest-5-en-26-al + 2 oxidized [adrenodoxin] + 2 H2O</text>
        <dbReference type="Rhea" id="RHEA:46432"/>
        <dbReference type="Rhea" id="RHEA-COMP:9998"/>
        <dbReference type="Rhea" id="RHEA-COMP:9999"/>
        <dbReference type="ChEBI" id="CHEBI:15377"/>
        <dbReference type="ChEBI" id="CHEBI:15378"/>
        <dbReference type="ChEBI" id="CHEBI:15379"/>
        <dbReference type="ChEBI" id="CHEBI:33737"/>
        <dbReference type="ChEBI" id="CHEBI:33738"/>
        <dbReference type="ChEBI" id="CHEBI:86113"/>
        <dbReference type="ChEBI" id="CHEBI:86115"/>
    </reaction>
    <physiologicalReaction direction="left-to-right" evidence="2">
        <dbReference type="Rhea" id="RHEA:46433"/>
    </physiologicalReaction>
</comment>
<comment type="catalytic activity">
    <reaction evidence="2">
        <text>4beta-hydroxycholesterol + 2 reduced [adrenodoxin] + O2 + 2 H(+) = (25R)-4beta,26-dihydroxycholesterol + 2 oxidized [adrenodoxin] + H2O</text>
        <dbReference type="Rhea" id="RHEA:46428"/>
        <dbReference type="Rhea" id="RHEA-COMP:9998"/>
        <dbReference type="Rhea" id="RHEA-COMP:9999"/>
        <dbReference type="ChEBI" id="CHEBI:15377"/>
        <dbReference type="ChEBI" id="CHEBI:15378"/>
        <dbReference type="ChEBI" id="CHEBI:15379"/>
        <dbReference type="ChEBI" id="CHEBI:33737"/>
        <dbReference type="ChEBI" id="CHEBI:33738"/>
        <dbReference type="ChEBI" id="CHEBI:85778"/>
        <dbReference type="ChEBI" id="CHEBI:86113"/>
    </reaction>
    <physiologicalReaction direction="left-to-right" evidence="2">
        <dbReference type="Rhea" id="RHEA:46429"/>
    </physiologicalReaction>
</comment>
<comment type="catalytic activity">
    <reaction evidence="2">
        <text>(25R)-3beta-hydroxy-5-cholesten-26-al + 2 reduced [adrenodoxin] + O2 + H(+) = (25R)-3beta-hydroxy-5-cholestenoate + 2 oxidized [adrenodoxin] + H2O</text>
        <dbReference type="Rhea" id="RHEA:45236"/>
        <dbReference type="Rhea" id="RHEA-COMP:9998"/>
        <dbReference type="Rhea" id="RHEA-COMP:9999"/>
        <dbReference type="ChEBI" id="CHEBI:15377"/>
        <dbReference type="ChEBI" id="CHEBI:15378"/>
        <dbReference type="ChEBI" id="CHEBI:15379"/>
        <dbReference type="ChEBI" id="CHEBI:33737"/>
        <dbReference type="ChEBI" id="CHEBI:33738"/>
        <dbReference type="ChEBI" id="CHEBI:86096"/>
        <dbReference type="ChEBI" id="CHEBI:86098"/>
    </reaction>
    <physiologicalReaction direction="left-to-right" evidence="2">
        <dbReference type="Rhea" id="RHEA:45237"/>
    </physiologicalReaction>
</comment>
<comment type="catalytic activity">
    <reaction evidence="2">
        <text>(25R)-cholest-5-ene-3beta,26-diol + 2 reduced [adrenodoxin] + O2 + 2 H(+) = (25R)-3beta-hydroxy-5-cholesten-26-al + 2 oxidized [adrenodoxin] + 2 H2O</text>
        <dbReference type="Rhea" id="RHEA:46092"/>
        <dbReference type="Rhea" id="RHEA-COMP:9998"/>
        <dbReference type="Rhea" id="RHEA-COMP:9999"/>
        <dbReference type="ChEBI" id="CHEBI:15377"/>
        <dbReference type="ChEBI" id="CHEBI:15378"/>
        <dbReference type="ChEBI" id="CHEBI:15379"/>
        <dbReference type="ChEBI" id="CHEBI:33737"/>
        <dbReference type="ChEBI" id="CHEBI:33738"/>
        <dbReference type="ChEBI" id="CHEBI:76591"/>
        <dbReference type="ChEBI" id="CHEBI:86096"/>
    </reaction>
    <physiologicalReaction direction="left-to-right" evidence="2">
        <dbReference type="Rhea" id="RHEA:46093"/>
    </physiologicalReaction>
</comment>
<comment type="catalytic activity">
    <reaction evidence="8">
        <text>(25R)-3alpha,7alpha,12alpha-trihydroxy-5beta-cholestan-26-al + 2 reduced [adrenodoxin] + O2 + H(+) = (25R)-3alpha,7alpha,12alpha-trihydroxy-5beta-cholestan-26-oate + 2 oxidized [adrenodoxin] + H2O</text>
        <dbReference type="Rhea" id="RHEA:34627"/>
        <dbReference type="Rhea" id="RHEA-COMP:9998"/>
        <dbReference type="Rhea" id="RHEA-COMP:9999"/>
        <dbReference type="ChEBI" id="CHEBI:15377"/>
        <dbReference type="ChEBI" id="CHEBI:15378"/>
        <dbReference type="ChEBI" id="CHEBI:15379"/>
        <dbReference type="ChEBI" id="CHEBI:33737"/>
        <dbReference type="ChEBI" id="CHEBI:33738"/>
        <dbReference type="ChEBI" id="CHEBI:48940"/>
        <dbReference type="ChEBI" id="CHEBI:58734"/>
    </reaction>
    <physiologicalReaction direction="left-to-right" evidence="7">
        <dbReference type="Rhea" id="RHEA:34628"/>
    </physiologicalReaction>
</comment>
<comment type="catalytic activity">
    <reaction evidence="2">
        <text>5beta-cholestane-3alpha,7alpha,12alpha-triol + 2 reduced [adrenodoxin] + O2 + 2 H(+) = (25R)-5beta-cholestane-3alpha,7alpha,12alpha,26-tetrol + 2 oxidized [adrenodoxin] + H2O</text>
        <dbReference type="Rhea" id="RHEA:14373"/>
        <dbReference type="Rhea" id="RHEA-COMP:9998"/>
        <dbReference type="Rhea" id="RHEA-COMP:9999"/>
        <dbReference type="ChEBI" id="CHEBI:15377"/>
        <dbReference type="ChEBI" id="CHEBI:15378"/>
        <dbReference type="ChEBI" id="CHEBI:15379"/>
        <dbReference type="ChEBI" id="CHEBI:16496"/>
        <dbReference type="ChEBI" id="CHEBI:33737"/>
        <dbReference type="ChEBI" id="CHEBI:33738"/>
        <dbReference type="ChEBI" id="CHEBI:48939"/>
    </reaction>
    <physiologicalReaction direction="left-to-right" evidence="2">
        <dbReference type="Rhea" id="RHEA:14374"/>
    </physiologicalReaction>
</comment>
<comment type="cofactor">
    <cofactor evidence="5">
        <name>heme</name>
        <dbReference type="ChEBI" id="CHEBI:30413"/>
    </cofactor>
</comment>
<comment type="pathway">
    <text evidence="2">Hormone biosynthesis; cholecalciferol biosynthesis.</text>
</comment>
<comment type="pathway">
    <text evidence="2">Steroid metabolism; cholesterol degradation.</text>
</comment>
<comment type="pathway">
    <text evidence="5">Lipid metabolism; bile acid biosynthesis.</text>
</comment>
<comment type="subunit">
    <text evidence="1">Interacts with HSP70; this interaction is required for initial targeting to mitochondria.</text>
</comment>
<comment type="subcellular location">
    <subcellularLocation>
        <location evidence="1">Mitochondrion inner membrane</location>
        <topology evidence="1">Peripheral membrane protein</topology>
    </subcellularLocation>
    <text evidence="1">Post-translationally targeted to mitochondria. All three of the receptor proteins in the TOM complex, TOMM70, TOMM20 and TOMM22 are required for the translocation across the mitochondrial outer membrane. After translocation into the matrix, associates with the inner membrane as a membrane extrinsic protein.</text>
</comment>
<comment type="tissue specificity">
    <text evidence="5">Expressed in all tissues tested. Highest expression in liver and duodenum, followed by adrenal gland and lung. Low expression in kidney and spleen.</text>
</comment>
<comment type="similarity">
    <text evidence="7">Belongs to the cytochrome P450 family.</text>
</comment>
<feature type="transit peptide" description="Mitochondrion" evidence="5">
    <location>
        <begin position="1"/>
        <end position="36"/>
    </location>
</feature>
<feature type="chain" id="PRO_0000003620" description="Sterol 26-hydroxylase, mitochondrial">
    <location>
        <begin position="37"/>
        <end position="535"/>
    </location>
</feature>
<feature type="region of interest" description="Sterol-binding" evidence="4">
    <location>
        <begin position="387"/>
        <end position="401"/>
    </location>
</feature>
<feature type="binding site" description="axial binding residue">
    <location>
        <position position="480"/>
    </location>
    <ligand>
        <name>heme</name>
        <dbReference type="ChEBI" id="CHEBI:30413"/>
    </ligand>
    <ligandPart>
        <name>Fe</name>
        <dbReference type="ChEBI" id="CHEBI:18248"/>
    </ligandPart>
</feature>
<feature type="modified residue" description="N6-acetyllysine" evidence="3">
    <location>
        <position position="286"/>
    </location>
</feature>
<feature type="modified residue" description="N6-acetyllysine" evidence="3">
    <location>
        <position position="524"/>
    </location>
</feature>
<proteinExistence type="evidence at protein level"/>
<name>CP27A_RABIT</name>
<keyword id="KW-0007">Acetylation</keyword>
<keyword id="KW-0153">Cholesterol metabolism</keyword>
<keyword id="KW-0903">Direct protein sequencing</keyword>
<keyword id="KW-0349">Heme</keyword>
<keyword id="KW-0408">Iron</keyword>
<keyword id="KW-0444">Lipid biosynthesis</keyword>
<keyword id="KW-0443">Lipid metabolism</keyword>
<keyword id="KW-0472">Membrane</keyword>
<keyword id="KW-0479">Metal-binding</keyword>
<keyword id="KW-0496">Mitochondrion</keyword>
<keyword id="KW-0999">Mitochondrion inner membrane</keyword>
<keyword id="KW-0503">Monooxygenase</keyword>
<keyword id="KW-0560">Oxidoreductase</keyword>
<keyword id="KW-1185">Reference proteome</keyword>
<keyword id="KW-0752">Steroid biosynthesis</keyword>
<keyword id="KW-0753">Steroid metabolism</keyword>
<keyword id="KW-1207">Sterol metabolism</keyword>
<keyword id="KW-0809">Transit peptide</keyword>
<evidence type="ECO:0000250" key="1">
    <source>
        <dbReference type="UniProtKB" id="P17178"/>
    </source>
</evidence>
<evidence type="ECO:0000250" key="2">
    <source>
        <dbReference type="UniProtKB" id="Q02318"/>
    </source>
</evidence>
<evidence type="ECO:0000250" key="3">
    <source>
        <dbReference type="UniProtKB" id="Q9DBG1"/>
    </source>
</evidence>
<evidence type="ECO:0000255" key="4"/>
<evidence type="ECO:0000269" key="5">
    <source>
    </source>
</evidence>
<evidence type="ECO:0000303" key="6">
    <source>
    </source>
</evidence>
<evidence type="ECO:0000305" key="7"/>
<evidence type="ECO:0000305" key="8">
    <source>
    </source>
</evidence>
<organism>
    <name type="scientific">Oryctolagus cuniculus</name>
    <name type="common">Rabbit</name>
    <dbReference type="NCBI Taxonomy" id="9986"/>
    <lineage>
        <taxon>Eukaryota</taxon>
        <taxon>Metazoa</taxon>
        <taxon>Chordata</taxon>
        <taxon>Craniata</taxon>
        <taxon>Vertebrata</taxon>
        <taxon>Euteleostomi</taxon>
        <taxon>Mammalia</taxon>
        <taxon>Eutheria</taxon>
        <taxon>Euarchontoglires</taxon>
        <taxon>Glires</taxon>
        <taxon>Lagomorpha</taxon>
        <taxon>Leporidae</taxon>
        <taxon>Oryctolagus</taxon>
    </lineage>
</organism>
<protein>
    <recommendedName>
        <fullName evidence="6">Sterol 26-hydroxylase, mitochondrial</fullName>
        <ecNumber evidence="5">1.14.15.15</ecNumber>
    </recommendedName>
    <alternativeName>
        <fullName evidence="8">5-beta-cholestane-3-alpha,7-alpha,12-alpha-triol 26-hydroxylase</fullName>
    </alternativeName>
    <alternativeName>
        <fullName>Cytochrome P-450C27/25</fullName>
    </alternativeName>
    <alternativeName>
        <fullName>Cytochrome P450 27</fullName>
    </alternativeName>
    <alternativeName>
        <fullName evidence="2">Sterol 27-hydroxylase</fullName>
    </alternativeName>
    <alternativeName>
        <fullName evidence="2">Vitamin D(3) 25-hydroxylase</fullName>
    </alternativeName>
</protein>
<reference key="1">
    <citation type="journal article" date="1989" name="J. Biol. Chem.">
        <title>Cloning, structure, and expression of the mitochondrial cytochrome P-450 sterol 26-hydroxylase, a bile acid biosynthetic enzyme.</title>
        <authorList>
            <person name="Andersson S."/>
            <person name="Davis D.L."/>
            <person name="Dahlbaeck H."/>
            <person name="Joernvall H."/>
            <person name="Russell D.W."/>
        </authorList>
    </citation>
    <scope>NUCLEOTIDE SEQUENCE [MRNA]</scope>
    <scope>PROTEIN SEQUENCE OF 37-51; 357-365; 367-380; 414-424; 505-521 AND 526-535</scope>
    <scope>FUNCTION</scope>
    <scope>CATALYTIC ACTIVITY</scope>
    <scope>TISSUE SPECIFICITY</scope>
</reference>
<dbReference type="EC" id="1.14.15.15" evidence="5"/>
<dbReference type="EMBL" id="J04717">
    <property type="protein sequence ID" value="AAA31225.1"/>
    <property type="molecule type" value="mRNA"/>
</dbReference>
<dbReference type="PIR" id="A33813">
    <property type="entry name" value="A33813"/>
</dbReference>
<dbReference type="RefSeq" id="NP_001177359.1">
    <property type="nucleotide sequence ID" value="NM_001190430.2"/>
</dbReference>
<dbReference type="SMR" id="P17177"/>
<dbReference type="FunCoup" id="P17177">
    <property type="interactions" value="448"/>
</dbReference>
<dbReference type="STRING" id="9986.ENSOCUP00000002930"/>
<dbReference type="PaxDb" id="9986-ENSOCUP00000002930"/>
<dbReference type="GeneID" id="100348736"/>
<dbReference type="KEGG" id="ocu:100348736"/>
<dbReference type="CTD" id="1593"/>
<dbReference type="eggNOG" id="KOG0159">
    <property type="taxonomic scope" value="Eukaryota"/>
</dbReference>
<dbReference type="InParanoid" id="P17177"/>
<dbReference type="OrthoDB" id="3945418at2759"/>
<dbReference type="UniPathway" id="UPA00221"/>
<dbReference type="UniPathway" id="UPA00955"/>
<dbReference type="UniPathway" id="UPA01058"/>
<dbReference type="Proteomes" id="UP000001811">
    <property type="component" value="Unplaced"/>
</dbReference>
<dbReference type="GO" id="GO:0005743">
    <property type="term" value="C:mitochondrial inner membrane"/>
    <property type="evidence" value="ECO:0000250"/>
    <property type="project" value="UniProtKB"/>
</dbReference>
<dbReference type="GO" id="GO:0047748">
    <property type="term" value="F:cholestanetetraol 26-dehydrogenase activity"/>
    <property type="evidence" value="ECO:0000250"/>
    <property type="project" value="UniProtKB"/>
</dbReference>
<dbReference type="GO" id="GO:0031073">
    <property type="term" value="F:cholesterol 26-hydroxylase activity"/>
    <property type="evidence" value="ECO:0000250"/>
    <property type="project" value="UniProtKB"/>
</dbReference>
<dbReference type="GO" id="GO:0008123">
    <property type="term" value="F:cholesterol 7-alpha-monooxygenase activity"/>
    <property type="evidence" value="ECO:0000250"/>
    <property type="project" value="UniProtKB"/>
</dbReference>
<dbReference type="GO" id="GO:0008386">
    <property type="term" value="F:cholesterol monooxygenase (side-chain-cleaving) activity"/>
    <property type="evidence" value="ECO:0000250"/>
    <property type="project" value="UniProtKB"/>
</dbReference>
<dbReference type="GO" id="GO:0020037">
    <property type="term" value="F:heme binding"/>
    <property type="evidence" value="ECO:0000250"/>
    <property type="project" value="UniProtKB"/>
</dbReference>
<dbReference type="GO" id="GO:0030544">
    <property type="term" value="F:Hsp70 protein binding"/>
    <property type="evidence" value="ECO:0000250"/>
    <property type="project" value="UniProtKB"/>
</dbReference>
<dbReference type="GO" id="GO:0005506">
    <property type="term" value="F:iron ion binding"/>
    <property type="evidence" value="ECO:0007669"/>
    <property type="project" value="InterPro"/>
</dbReference>
<dbReference type="GO" id="GO:0030343">
    <property type="term" value="F:vitamin D3 25-hydroxylase activity"/>
    <property type="evidence" value="ECO:0000250"/>
    <property type="project" value="UniProtKB"/>
</dbReference>
<dbReference type="GO" id="GO:0006699">
    <property type="term" value="P:bile acid biosynthetic process"/>
    <property type="evidence" value="ECO:0000250"/>
    <property type="project" value="UniProtKB"/>
</dbReference>
<dbReference type="GO" id="GO:0006700">
    <property type="term" value="P:C21-steroid hormone biosynthetic process"/>
    <property type="evidence" value="ECO:0000250"/>
    <property type="project" value="UniProtKB"/>
</dbReference>
<dbReference type="GO" id="GO:0036378">
    <property type="term" value="P:calcitriol biosynthetic process from calciol"/>
    <property type="evidence" value="ECO:0000250"/>
    <property type="project" value="UniProtKB"/>
</dbReference>
<dbReference type="GO" id="GO:0071375">
    <property type="term" value="P:cellular response to peptide hormone stimulus"/>
    <property type="evidence" value="ECO:0007669"/>
    <property type="project" value="TreeGrafter"/>
</dbReference>
<dbReference type="GO" id="GO:0006707">
    <property type="term" value="P:cholesterol catabolic process"/>
    <property type="evidence" value="ECO:0000250"/>
    <property type="project" value="UniProtKB"/>
</dbReference>
<dbReference type="GO" id="GO:0034650">
    <property type="term" value="P:cortisol metabolic process"/>
    <property type="evidence" value="ECO:0007669"/>
    <property type="project" value="TreeGrafter"/>
</dbReference>
<dbReference type="GO" id="GO:0006704">
    <property type="term" value="P:glucocorticoid biosynthetic process"/>
    <property type="evidence" value="ECO:0007669"/>
    <property type="project" value="TreeGrafter"/>
</dbReference>
<dbReference type="FunFam" id="1.10.630.10:FF:000006">
    <property type="entry name" value="Cytochrome P450 302a1, mitochondrial"/>
    <property type="match status" value="1"/>
</dbReference>
<dbReference type="Gene3D" id="1.10.630.10">
    <property type="entry name" value="Cytochrome P450"/>
    <property type="match status" value="1"/>
</dbReference>
<dbReference type="InterPro" id="IPR050479">
    <property type="entry name" value="CYP11_CYP27_families"/>
</dbReference>
<dbReference type="InterPro" id="IPR001128">
    <property type="entry name" value="Cyt_P450"/>
</dbReference>
<dbReference type="InterPro" id="IPR017972">
    <property type="entry name" value="Cyt_P450_CS"/>
</dbReference>
<dbReference type="InterPro" id="IPR002401">
    <property type="entry name" value="Cyt_P450_E_grp-I"/>
</dbReference>
<dbReference type="InterPro" id="IPR036396">
    <property type="entry name" value="Cyt_P450_sf"/>
</dbReference>
<dbReference type="PANTHER" id="PTHR24279">
    <property type="entry name" value="CYTOCHROME P450"/>
    <property type="match status" value="1"/>
</dbReference>
<dbReference type="PANTHER" id="PTHR24279:SF123">
    <property type="entry name" value="CYTOCHROME P450 FAMILY 27 SUBFAMILY A MEMBER 1"/>
    <property type="match status" value="1"/>
</dbReference>
<dbReference type="Pfam" id="PF00067">
    <property type="entry name" value="p450"/>
    <property type="match status" value="1"/>
</dbReference>
<dbReference type="PRINTS" id="PR00463">
    <property type="entry name" value="EP450I"/>
</dbReference>
<dbReference type="PRINTS" id="PR00385">
    <property type="entry name" value="P450"/>
</dbReference>
<dbReference type="SUPFAM" id="SSF48264">
    <property type="entry name" value="Cytochrome P450"/>
    <property type="match status" value="1"/>
</dbReference>
<dbReference type="PROSITE" id="PS00086">
    <property type="entry name" value="CYTOCHROME_P450"/>
    <property type="match status" value="1"/>
</dbReference>